<reference key="1">
    <citation type="journal article" date="2000" name="Nature">
        <title>Sequence and analysis of chromosome 5 of the plant Arabidopsis thaliana.</title>
        <authorList>
            <person name="Tabata S."/>
            <person name="Kaneko T."/>
            <person name="Nakamura Y."/>
            <person name="Kotani H."/>
            <person name="Kato T."/>
            <person name="Asamizu E."/>
            <person name="Miyajima N."/>
            <person name="Sasamoto S."/>
            <person name="Kimura T."/>
            <person name="Hosouchi T."/>
            <person name="Kawashima K."/>
            <person name="Kohara M."/>
            <person name="Matsumoto M."/>
            <person name="Matsuno A."/>
            <person name="Muraki A."/>
            <person name="Nakayama S."/>
            <person name="Nakazaki N."/>
            <person name="Naruo K."/>
            <person name="Okumura S."/>
            <person name="Shinpo S."/>
            <person name="Takeuchi C."/>
            <person name="Wada T."/>
            <person name="Watanabe A."/>
            <person name="Yamada M."/>
            <person name="Yasuda M."/>
            <person name="Sato S."/>
            <person name="de la Bastide M."/>
            <person name="Huang E."/>
            <person name="Spiegel L."/>
            <person name="Gnoj L."/>
            <person name="O'Shaughnessy A."/>
            <person name="Preston R."/>
            <person name="Habermann K."/>
            <person name="Murray J."/>
            <person name="Johnson D."/>
            <person name="Rohlfing T."/>
            <person name="Nelson J."/>
            <person name="Stoneking T."/>
            <person name="Pepin K."/>
            <person name="Spieth J."/>
            <person name="Sekhon M."/>
            <person name="Armstrong J."/>
            <person name="Becker M."/>
            <person name="Belter E."/>
            <person name="Cordum H."/>
            <person name="Cordes M."/>
            <person name="Courtney L."/>
            <person name="Courtney W."/>
            <person name="Dante M."/>
            <person name="Du H."/>
            <person name="Edwards J."/>
            <person name="Fryman J."/>
            <person name="Haakensen B."/>
            <person name="Lamar E."/>
            <person name="Latreille P."/>
            <person name="Leonard S."/>
            <person name="Meyer R."/>
            <person name="Mulvaney E."/>
            <person name="Ozersky P."/>
            <person name="Riley A."/>
            <person name="Strowmatt C."/>
            <person name="Wagner-McPherson C."/>
            <person name="Wollam A."/>
            <person name="Yoakum M."/>
            <person name="Bell M."/>
            <person name="Dedhia N."/>
            <person name="Parnell L."/>
            <person name="Shah R."/>
            <person name="Rodriguez M."/>
            <person name="Hoon See L."/>
            <person name="Vil D."/>
            <person name="Baker J."/>
            <person name="Kirchoff K."/>
            <person name="Toth K."/>
            <person name="King L."/>
            <person name="Bahret A."/>
            <person name="Miller B."/>
            <person name="Marra M.A."/>
            <person name="Martienssen R."/>
            <person name="McCombie W.R."/>
            <person name="Wilson R.K."/>
            <person name="Murphy G."/>
            <person name="Bancroft I."/>
            <person name="Volckaert G."/>
            <person name="Wambutt R."/>
            <person name="Duesterhoeft A."/>
            <person name="Stiekema W."/>
            <person name="Pohl T."/>
            <person name="Entian K.-D."/>
            <person name="Terryn N."/>
            <person name="Hartley N."/>
            <person name="Bent E."/>
            <person name="Johnson S."/>
            <person name="Langham S.-A."/>
            <person name="McCullagh B."/>
            <person name="Robben J."/>
            <person name="Grymonprez B."/>
            <person name="Zimmermann W."/>
            <person name="Ramsperger U."/>
            <person name="Wedler H."/>
            <person name="Balke K."/>
            <person name="Wedler E."/>
            <person name="Peters S."/>
            <person name="van Staveren M."/>
            <person name="Dirkse W."/>
            <person name="Mooijman P."/>
            <person name="Klein Lankhorst R."/>
            <person name="Weitzenegger T."/>
            <person name="Bothe G."/>
            <person name="Rose M."/>
            <person name="Hauf J."/>
            <person name="Berneiser S."/>
            <person name="Hempel S."/>
            <person name="Feldpausch M."/>
            <person name="Lamberth S."/>
            <person name="Villarroel R."/>
            <person name="Gielen J."/>
            <person name="Ardiles W."/>
            <person name="Bents O."/>
            <person name="Lemcke K."/>
            <person name="Kolesov G."/>
            <person name="Mayer K.F.X."/>
            <person name="Rudd S."/>
            <person name="Schoof H."/>
            <person name="Schueller C."/>
            <person name="Zaccaria P."/>
            <person name="Mewes H.-W."/>
            <person name="Bevan M."/>
            <person name="Fransz P.F."/>
        </authorList>
    </citation>
    <scope>NUCLEOTIDE SEQUENCE [LARGE SCALE GENOMIC DNA]</scope>
    <source>
        <strain>cv. Columbia</strain>
    </source>
</reference>
<reference key="2">
    <citation type="journal article" date="2017" name="Plant J.">
        <title>Araport11: a complete reannotation of the Arabidopsis thaliana reference genome.</title>
        <authorList>
            <person name="Cheng C.Y."/>
            <person name="Krishnakumar V."/>
            <person name="Chan A.P."/>
            <person name="Thibaud-Nissen F."/>
            <person name="Schobel S."/>
            <person name="Town C.D."/>
        </authorList>
    </citation>
    <scope>GENOME REANNOTATION</scope>
    <source>
        <strain>cv. Columbia</strain>
    </source>
</reference>
<reference key="3">
    <citation type="submission" date="2006-07" db="EMBL/GenBank/DDBJ databases">
        <title>Large-scale analysis of RIKEN Arabidopsis full-length (RAFL) cDNAs.</title>
        <authorList>
            <person name="Totoki Y."/>
            <person name="Seki M."/>
            <person name="Ishida J."/>
            <person name="Nakajima M."/>
            <person name="Enju A."/>
            <person name="Kamiya A."/>
            <person name="Narusaka M."/>
            <person name="Shin-i T."/>
            <person name="Nakagawa M."/>
            <person name="Sakamoto N."/>
            <person name="Oishi K."/>
            <person name="Kohara Y."/>
            <person name="Kobayashi M."/>
            <person name="Toyoda A."/>
            <person name="Sakaki Y."/>
            <person name="Sakurai T."/>
            <person name="Iida K."/>
            <person name="Akiyama K."/>
            <person name="Satou M."/>
            <person name="Toyoda T."/>
            <person name="Konagaya A."/>
            <person name="Carninci P."/>
            <person name="Kawai J."/>
            <person name="Hayashizaki Y."/>
            <person name="Shinozaki K."/>
        </authorList>
    </citation>
    <scope>NUCLEOTIDE SEQUENCE [LARGE SCALE MRNA] OF 1-343</scope>
    <source>
        <strain>cv. Columbia</strain>
    </source>
</reference>
<reference key="4">
    <citation type="journal article" date="2020" name="Nat. Commun.">
        <title>Coupling of H3K27me3 recognition with transcriptional repression through the BAH-PHD-CPL2 complex in Arabidopsis.</title>
        <authorList>
            <person name="Zhang Y.-Z."/>
            <person name="Yuan J."/>
            <person name="Zhang L."/>
            <person name="Chen C."/>
            <person name="Wang Y."/>
            <person name="Zhang G."/>
            <person name="Peng L."/>
            <person name="Xie S.-S."/>
            <person name="Jiang J."/>
            <person name="Zhu J.-K."/>
            <person name="Du J."/>
            <person name="Duan C.-G."/>
        </authorList>
    </citation>
    <scope>FUNCTION</scope>
    <scope>DISRUPTION PHENOTYPE</scope>
    <scope>MUTAGENESIS OF ASP-306</scope>
    <scope>SUBUNIT</scope>
    <scope>INTERACTION WITH AIPP3/BDT1 AND CPL2</scope>
    <scope>TISSUE SPECIFICITY</scope>
    <scope>DOMAIN</scope>
    <source>
        <strain>cv. Columbia</strain>
    </source>
</reference>
<reference key="5">
    <citation type="journal article" date="2021" name="J. Integr. Plant Biol.">
        <title>A histone H3K27me3 reader cooperates with a family of PHD finger-containing proteins to regulate flowering time in Arabidopsis.</title>
        <authorList>
            <person name="Qian F."/>
            <person name="Zhao Q.-Y."/>
            <person name="Zhang T.-N."/>
            <person name="Li Y.-L."/>
            <person name="Su Y.-N."/>
            <person name="Li L."/>
            <person name="Sui J.-H."/>
            <person name="Chen S."/>
            <person name="He X.-J."/>
        </authorList>
    </citation>
    <scope>FUNCTION</scope>
    <scope>DISRUPTION PHENOTYPE</scope>
    <scope>INTERACTION WITH AIPP3/BDT1</scope>
    <source>
        <strain>cv. Columbia</strain>
    </source>
</reference>
<sequence length="1311" mass="142243">MADRRVGKRQMGQRGFSKVESGTCNVCSAPCSSCMHRNVGFTGSKLDESSDENCHGVVGSQCSVNEDDLLPSSMVNAHKSLNNTASEASNLVNSSHDALSENAESKETIRCSGISDDSGAAAMTSKPSLSGSRMKHKVSASANMLDQSSNCIEDQEDGILSADRAKQLKSGCSNNEIGNKDLADGSALNSDPIPGGSRKDEVKLESLQNPSSNHDDRVSSEKGNFKEKSRPGGNKERQEPSVEGSTRSGENRKDGKSSKSSSSNSSAVSESESDDSEMVEHDVKVCDICGDAGREDLLAICSGCSDGAEHTYCMREMLDEVPEGDWLCEECAEEAEKQKQEAKRKRETEVTFNTYSSGKRHADKIEAAPDAKRQVVEASTGSPKKSILPRVGALSRETSFKGLDRLRGKLNHQTSFSDDTESARSAGSQLQPPKGAFLKSSSFNCSSSKPKVQLMDDAIHPRQKTGKEDTALDLKVGGFRNVGKSMPSRTTDAGNSGGSDSQAKMLGSKVYHSQEGKSLKQVKDRNREANASASSIDQKLKSRGNSSVSHANNNRDLKGLQSDGKRGNLTKQVSNLSRNRLENSVVSGGDISTNEKCSASEQSSSQADCKDELPSTSCTGEGMPNHGTVALQDGLPRSRVPREVGKKSKEAFSKRQRSSLLAGAKGLPSSQKGGQTAESSDTSGVSDSDLSTTKNVKEDLNKGNRLRAAVDAALRKKPSFGKNRVLEQSDASLVANVDSSSEKTLRNQLPSKMHKNHVSHEGLQGGHPILWPTSDPYKQTIVTNEKQLIFPGADTIPSRLVEPEVSFPAVKPVMRDLPLVPSPVMLRSSAIPDHEFIWQGDLEVRKIINQSAMHSGIQAHLSTLASPRVAEVVNKFPETFSLNEVPRKSTWPTQFEKLGTKEAHIALFFFAKDTESYERNYKPLVDNMIKNDLALKGNLDNVDLLIFASNQLPSNCQRWNMLYFLWGVFQGRKETNPQKNTSLPTSNVLPRDRDPKELCQTSSPSKHLEKGSSLRESSSNGIETRNGTDARSHENPNNRESSIERSPSKKEDIALKVEEAGVNHIPPQVTGSNSGDSLVRKVQKVEEQELGGRKDLPLTVMGSGIQSHGQDNPLEKDLNSSQASHRKRPLWELSNPANENSSAINQKVELNNDGLCEGSPNKKLKTENGSSSLCRDTSGHDSGIMKKSPKVVFPLDLNDDSEMVDNLSPLGNDENNNNRRLISGTVPNLELALGAEETTEATMGLLPFLSRSSNSGEQSNNSMNKEKQKADEEEEDDAEVAASLSLSLSFPGTEERKNVNTPLFLFRDLPR</sequence>
<name>PAIP2_ARATH</name>
<gene>
    <name evidence="6" type="primary">PAIPP2</name>
    <name evidence="7" type="synonym">PHD2</name>
    <name evidence="9" type="ordered locus">At5g16680</name>
    <name evidence="10" type="ORF">F5E19.20</name>
</gene>
<feature type="chain" id="PRO_0000458546" description="Protein PARALOG OF AIPP2">
    <location>
        <begin position="1"/>
        <end position="1311"/>
    </location>
</feature>
<feature type="zinc finger region" description="PHD-type" evidence="2">
    <location>
        <begin position="283"/>
        <end position="334"/>
    </location>
</feature>
<feature type="region of interest" description="Disordered" evidence="3">
    <location>
        <begin position="1"/>
        <end position="21"/>
    </location>
</feature>
<feature type="region of interest" description="Disordered" evidence="3">
    <location>
        <begin position="114"/>
        <end position="141"/>
    </location>
</feature>
<feature type="region of interest" description="Disordered" evidence="3">
    <location>
        <begin position="178"/>
        <end position="280"/>
    </location>
</feature>
<feature type="region of interest" description="Disordered" evidence="3">
    <location>
        <begin position="369"/>
        <end position="390"/>
    </location>
</feature>
<feature type="region of interest" description="Disordered" evidence="3">
    <location>
        <begin position="411"/>
        <end position="440"/>
    </location>
</feature>
<feature type="region of interest" description="Disordered" evidence="3">
    <location>
        <begin position="460"/>
        <end position="701"/>
    </location>
</feature>
<feature type="region of interest" description="Disordered" evidence="3">
    <location>
        <begin position="975"/>
        <end position="1050"/>
    </location>
</feature>
<feature type="region of interest" description="Disordered" evidence="3">
    <location>
        <begin position="1059"/>
        <end position="1078"/>
    </location>
</feature>
<feature type="region of interest" description="Disordered" evidence="3">
    <location>
        <begin position="1087"/>
        <end position="1138"/>
    </location>
</feature>
<feature type="region of interest" description="Disordered" evidence="3">
    <location>
        <begin position="1152"/>
        <end position="1186"/>
    </location>
</feature>
<feature type="region of interest" description="Disordered" evidence="3">
    <location>
        <begin position="1249"/>
        <end position="1311"/>
    </location>
</feature>
<feature type="coiled-coil region" evidence="1">
    <location>
        <begin position="328"/>
        <end position="348"/>
    </location>
</feature>
<feature type="coiled-coil region" evidence="1">
    <location>
        <begin position="1256"/>
        <end position="1276"/>
    </location>
</feature>
<feature type="compositionally biased region" description="Basic and acidic residues" evidence="3">
    <location>
        <begin position="213"/>
        <end position="240"/>
    </location>
</feature>
<feature type="compositionally biased region" description="Low complexity" evidence="3">
    <location>
        <begin position="258"/>
        <end position="270"/>
    </location>
</feature>
<feature type="compositionally biased region" description="Polar residues" evidence="3">
    <location>
        <begin position="411"/>
        <end position="431"/>
    </location>
</feature>
<feature type="compositionally biased region" description="Basic and acidic residues" evidence="3">
    <location>
        <begin position="460"/>
        <end position="472"/>
    </location>
</feature>
<feature type="compositionally biased region" description="Polar residues" evidence="3">
    <location>
        <begin position="487"/>
        <end position="502"/>
    </location>
</feature>
<feature type="compositionally biased region" description="Basic and acidic residues" evidence="3">
    <location>
        <begin position="512"/>
        <end position="528"/>
    </location>
</feature>
<feature type="compositionally biased region" description="Polar residues" evidence="3">
    <location>
        <begin position="529"/>
        <end position="552"/>
    </location>
</feature>
<feature type="compositionally biased region" description="Basic and acidic residues" evidence="3">
    <location>
        <begin position="553"/>
        <end position="566"/>
    </location>
</feature>
<feature type="compositionally biased region" description="Polar residues" evidence="3">
    <location>
        <begin position="569"/>
        <end position="607"/>
    </location>
</feature>
<feature type="compositionally biased region" description="Basic and acidic residues" evidence="3">
    <location>
        <begin position="640"/>
        <end position="653"/>
    </location>
</feature>
<feature type="compositionally biased region" description="Polar residues" evidence="3">
    <location>
        <begin position="668"/>
        <end position="694"/>
    </location>
</feature>
<feature type="compositionally biased region" description="Polar residues" evidence="3">
    <location>
        <begin position="977"/>
        <end position="988"/>
    </location>
</feature>
<feature type="compositionally biased region" description="Polar residues" evidence="3">
    <location>
        <begin position="1014"/>
        <end position="1025"/>
    </location>
</feature>
<feature type="compositionally biased region" description="Basic and acidic residues" evidence="3">
    <location>
        <begin position="1026"/>
        <end position="1050"/>
    </location>
</feature>
<feature type="compositionally biased region" description="Basic and acidic residues" evidence="3">
    <location>
        <begin position="1087"/>
        <end position="1096"/>
    </location>
</feature>
<feature type="compositionally biased region" description="Polar residues" evidence="3">
    <location>
        <begin position="1250"/>
        <end position="1263"/>
    </location>
</feature>
<feature type="compositionally biased region" description="Low complexity" evidence="3">
    <location>
        <begin position="1280"/>
        <end position="1289"/>
    </location>
</feature>
<feature type="binding site" evidence="2">
    <location>
        <position position="286"/>
    </location>
    <ligand>
        <name>Zn(2+)</name>
        <dbReference type="ChEBI" id="CHEBI:29105"/>
        <label>1</label>
    </ligand>
</feature>
<feature type="binding site" evidence="2">
    <location>
        <position position="289"/>
    </location>
    <ligand>
        <name>Zn(2+)</name>
        <dbReference type="ChEBI" id="CHEBI:29105"/>
        <label>1</label>
    </ligand>
</feature>
<feature type="binding site" evidence="2">
    <location>
        <position position="301"/>
    </location>
    <ligand>
        <name>Zn(2+)</name>
        <dbReference type="ChEBI" id="CHEBI:29105"/>
        <label>2</label>
    </ligand>
</feature>
<feature type="binding site" evidence="2">
    <location>
        <position position="304"/>
    </location>
    <ligand>
        <name>Zn(2+)</name>
        <dbReference type="ChEBI" id="CHEBI:29105"/>
        <label>2</label>
    </ligand>
</feature>
<feature type="binding site" evidence="2">
    <location>
        <position position="310"/>
    </location>
    <ligand>
        <name>Zn(2+)</name>
        <dbReference type="ChEBI" id="CHEBI:29105"/>
        <label>1</label>
    </ligand>
</feature>
<feature type="binding site" evidence="2">
    <location>
        <position position="313"/>
    </location>
    <ligand>
        <name>Zn(2+)</name>
        <dbReference type="ChEBI" id="CHEBI:29105"/>
        <label>1</label>
    </ligand>
</feature>
<feature type="binding site" evidence="2">
    <location>
        <position position="328"/>
    </location>
    <ligand>
        <name>Zn(2+)</name>
        <dbReference type="ChEBI" id="CHEBI:29105"/>
        <label>2</label>
    </ligand>
</feature>
<feature type="binding site" evidence="2">
    <location>
        <position position="331"/>
    </location>
    <ligand>
        <name>Zn(2+)</name>
        <dbReference type="ChEBI" id="CHEBI:29105"/>
        <label>2</label>
    </ligand>
</feature>
<feature type="mutagenesis site" description="Lost binding to unmodified histone H3 lysine 4 (H3K4me0)." evidence="4">
    <original>D</original>
    <variation>K</variation>
    <location>
        <position position="306"/>
    </location>
</feature>
<evidence type="ECO:0000255" key="1"/>
<evidence type="ECO:0000255" key="2">
    <source>
        <dbReference type="PROSITE-ProRule" id="PRU00146"/>
    </source>
</evidence>
<evidence type="ECO:0000256" key="3">
    <source>
        <dbReference type="SAM" id="MobiDB-lite"/>
    </source>
</evidence>
<evidence type="ECO:0000269" key="4">
    <source>
    </source>
</evidence>
<evidence type="ECO:0000269" key="5">
    <source>
    </source>
</evidence>
<evidence type="ECO:0000303" key="6">
    <source>
    </source>
</evidence>
<evidence type="ECO:0000303" key="7">
    <source>
    </source>
</evidence>
<evidence type="ECO:0000305" key="8"/>
<evidence type="ECO:0000312" key="9">
    <source>
        <dbReference type="Araport" id="AT5G16680"/>
    </source>
</evidence>
<evidence type="ECO:0000312" key="10">
    <source>
        <dbReference type="EMBL" id="CAC01832.1"/>
    </source>
</evidence>
<keyword id="KW-0175">Coiled coil</keyword>
<keyword id="KW-0479">Metal-binding</keyword>
<keyword id="KW-1185">Reference proteome</keyword>
<keyword id="KW-0804">Transcription</keyword>
<keyword id="KW-0805">Transcription regulation</keyword>
<keyword id="KW-0862">Zinc</keyword>
<keyword id="KW-0863">Zinc-finger</keyword>
<dbReference type="EMBL" id="AL391147">
    <property type="protein sequence ID" value="CAC01832.1"/>
    <property type="status" value="ALT_SEQ"/>
    <property type="molecule type" value="Genomic_DNA"/>
</dbReference>
<dbReference type="EMBL" id="CP002688">
    <property type="protein sequence ID" value="AED92325.1"/>
    <property type="molecule type" value="Genomic_DNA"/>
</dbReference>
<dbReference type="EMBL" id="CP002688">
    <property type="protein sequence ID" value="ANM70615.1"/>
    <property type="molecule type" value="Genomic_DNA"/>
</dbReference>
<dbReference type="EMBL" id="AK229414">
    <property type="protein sequence ID" value="BAF01275.1"/>
    <property type="molecule type" value="mRNA"/>
</dbReference>
<dbReference type="PIR" id="T51500">
    <property type="entry name" value="T51500"/>
</dbReference>
<dbReference type="RefSeq" id="NP_001332208.1">
    <property type="nucleotide sequence ID" value="NM_001343460.1"/>
</dbReference>
<dbReference type="RefSeq" id="NP_197170.3">
    <property type="nucleotide sequence ID" value="NM_121673.5"/>
</dbReference>
<dbReference type="SMR" id="F4KE59"/>
<dbReference type="FunCoup" id="F4KE59">
    <property type="interactions" value="1768"/>
</dbReference>
<dbReference type="STRING" id="3702.F4KE59"/>
<dbReference type="iPTMnet" id="F4KE59"/>
<dbReference type="PaxDb" id="3702-AT5G16680.1"/>
<dbReference type="ProteomicsDB" id="193651"/>
<dbReference type="EnsemblPlants" id="AT5G16680.1">
    <property type="protein sequence ID" value="AT5G16680.1"/>
    <property type="gene ID" value="AT5G16680"/>
</dbReference>
<dbReference type="EnsemblPlants" id="AT5G16680.2">
    <property type="protein sequence ID" value="AT5G16680.2"/>
    <property type="gene ID" value="AT5G16680"/>
</dbReference>
<dbReference type="GeneID" id="831529"/>
<dbReference type="Gramene" id="AT5G16680.1">
    <property type="protein sequence ID" value="AT5G16680.1"/>
    <property type="gene ID" value="AT5G16680"/>
</dbReference>
<dbReference type="Gramene" id="AT5G16680.2">
    <property type="protein sequence ID" value="AT5G16680.2"/>
    <property type="gene ID" value="AT5G16680"/>
</dbReference>
<dbReference type="KEGG" id="ath:AT5G16680"/>
<dbReference type="Araport" id="AT5G16680"/>
<dbReference type="TAIR" id="AT5G16680"/>
<dbReference type="eggNOG" id="ENOG502QR3S">
    <property type="taxonomic scope" value="Eukaryota"/>
</dbReference>
<dbReference type="HOGENOM" id="CLU_005058_0_0_1"/>
<dbReference type="OMA" id="ESHEGNK"/>
<dbReference type="OrthoDB" id="787137at2759"/>
<dbReference type="PRO" id="PR:F4KE59"/>
<dbReference type="Proteomes" id="UP000006548">
    <property type="component" value="Chromosome 5"/>
</dbReference>
<dbReference type="ExpressionAtlas" id="F4KE59">
    <property type="expression patterns" value="baseline and differential"/>
</dbReference>
<dbReference type="GO" id="GO:0042393">
    <property type="term" value="F:histone binding"/>
    <property type="evidence" value="ECO:0000314"/>
    <property type="project" value="UniProtKB"/>
</dbReference>
<dbReference type="GO" id="GO:0061628">
    <property type="term" value="F:histone H3K27me3 reader activity"/>
    <property type="evidence" value="ECO:0000314"/>
    <property type="project" value="UniProtKB"/>
</dbReference>
<dbReference type="GO" id="GO:0008270">
    <property type="term" value="F:zinc ion binding"/>
    <property type="evidence" value="ECO:0007669"/>
    <property type="project" value="UniProtKB-KW"/>
</dbReference>
<dbReference type="GO" id="GO:0045814">
    <property type="term" value="P:negative regulation of gene expression, epigenetic"/>
    <property type="evidence" value="ECO:0000314"/>
    <property type="project" value="UniProtKB"/>
</dbReference>
<dbReference type="GO" id="GO:0034244">
    <property type="term" value="P:negative regulation of transcription elongation by RNA polymerase II"/>
    <property type="evidence" value="ECO:0000315"/>
    <property type="project" value="UniProtKB"/>
</dbReference>
<dbReference type="GO" id="GO:2000028">
    <property type="term" value="P:regulation of photoperiodism, flowering"/>
    <property type="evidence" value="ECO:0000315"/>
    <property type="project" value="UniProtKB"/>
</dbReference>
<dbReference type="Gene3D" id="3.30.40.10">
    <property type="entry name" value="Zinc/RING finger domain, C3HC4 (zinc finger)"/>
    <property type="match status" value="1"/>
</dbReference>
<dbReference type="InterPro" id="IPR056280">
    <property type="entry name" value="AIPP2-like_SPOC"/>
</dbReference>
<dbReference type="InterPro" id="IPR049914">
    <property type="entry name" value="PHD1-3/5-6"/>
</dbReference>
<dbReference type="InterPro" id="IPR011011">
    <property type="entry name" value="Znf_FYVE_PHD"/>
</dbReference>
<dbReference type="InterPro" id="IPR001965">
    <property type="entry name" value="Znf_PHD"/>
</dbReference>
<dbReference type="InterPro" id="IPR019787">
    <property type="entry name" value="Znf_PHD-finger"/>
</dbReference>
<dbReference type="InterPro" id="IPR013083">
    <property type="entry name" value="Znf_RING/FYVE/PHD"/>
</dbReference>
<dbReference type="PANTHER" id="PTHR33304">
    <property type="match status" value="1"/>
</dbReference>
<dbReference type="PANTHER" id="PTHR33304:SF9">
    <property type="entry name" value="RING_FYVE_PHD ZINC FINGER SUPERFAMILY PROTEIN"/>
    <property type="match status" value="1"/>
</dbReference>
<dbReference type="Pfam" id="PF00628">
    <property type="entry name" value="PHD"/>
    <property type="match status" value="1"/>
</dbReference>
<dbReference type="Pfam" id="PF23121">
    <property type="entry name" value="SPOC_AIPP2"/>
    <property type="match status" value="1"/>
</dbReference>
<dbReference type="SMART" id="SM00249">
    <property type="entry name" value="PHD"/>
    <property type="match status" value="1"/>
</dbReference>
<dbReference type="SUPFAM" id="SSF57903">
    <property type="entry name" value="FYVE/PHD zinc finger"/>
    <property type="match status" value="1"/>
</dbReference>
<dbReference type="PROSITE" id="PS50016">
    <property type="entry name" value="ZF_PHD_2"/>
    <property type="match status" value="1"/>
</dbReference>
<organism>
    <name type="scientific">Arabidopsis thaliana</name>
    <name type="common">Mouse-ear cress</name>
    <dbReference type="NCBI Taxonomy" id="3702"/>
    <lineage>
        <taxon>Eukaryota</taxon>
        <taxon>Viridiplantae</taxon>
        <taxon>Streptophyta</taxon>
        <taxon>Embryophyta</taxon>
        <taxon>Tracheophyta</taxon>
        <taxon>Spermatophyta</taxon>
        <taxon>Magnoliopsida</taxon>
        <taxon>eudicotyledons</taxon>
        <taxon>Gunneridae</taxon>
        <taxon>Pentapetalae</taxon>
        <taxon>rosids</taxon>
        <taxon>malvids</taxon>
        <taxon>Brassicales</taxon>
        <taxon>Brassicaceae</taxon>
        <taxon>Camelineae</taxon>
        <taxon>Arabidopsis</taxon>
    </lineage>
</organism>
<proteinExistence type="evidence at protein level"/>
<accession>F4KE59</accession>
<accession>A0A178UF49</accession>
<accession>Q0WNM4</accession>
<accession>Q9LFE9</accession>
<protein>
    <recommendedName>
        <fullName evidence="6">Protein PARALOG OF AIPP2</fullName>
    </recommendedName>
    <alternativeName>
        <fullName evidence="7">PHD finger-containing protein 2</fullName>
    </alternativeName>
</protein>
<comment type="function">
    <text evidence="4 5">Together with AIPP2 and AIPP3/BDT1, cooperates to form a BAH-PHD bivalent histone reader complex able to read histone H3 lysine 27 trimethylation (H3K27me3) and low-methylated H3K4 histone marks in order to regulate transcription, especially to prevent early flowering; promotes AIPP3/BDT1 binding to H3K27me3 (PubMed:33277495, PubMed:33433058). CPL2 is subsequently recruited to form a BAH-PHD-CPL2 complex (BPC) in order to silence several H3K27me3 and low-methylated H3K4 enriched loci, including AGO5, via the phosphorylation state-dependent inhibition of Pol II release from the transcriptional start site (e.g. Ser5P-Pol II dephosphorylation) (PubMed:33277495). The BPC complex represses flowering by inhibiting the expression of several genes, including AGL6, FT, FUL and SOC1 (PubMed:33277495).</text>
</comment>
<comment type="subunit">
    <text evidence="4 5">Part of the BAH-PHD bivalent histone reader complex that contains AIPP2, PAIPP2 and AIPP3/BDT1; the BAH-PHD module associates with CPL2 to form the BAH-PHD-CPL2 complex (BPC) for transcriptional repression (PubMed:33277495). Binds directly to AIPP3/BDT1 and CPL2, but not to AIPP2 (PubMed:33277495, PubMed:33433058).</text>
</comment>
<comment type="tissue specificity">
    <text evidence="4">Expressed ubiquitously.</text>
</comment>
<comment type="domain">
    <text evidence="6">The PHD domain (283-334) recognizes specifically unmodified histone H3 lysine 4 (H3K4me0), binding affinity being inversely proportional to H3K4 methylation level.</text>
</comment>
<comment type="disruption phenotype">
    <text evidence="4 5">No obvious developmental defects (PubMed:33433058). The double mutant aipp2-1 paipp2-1 exhibits multiple developmental defects, such as a dwarfed size, early flowering, small leaves and poor fertility (PubMed:33277495). Abnormally up-regulated expression of many genes localized at H3K27me3 and low-methylated H3K4 enriched loci associated with a higher accumulation of activated RNA polymerase II phosphorylated at 'Ser-5' (Ser5P-Pol II) in the double mutant aipp2-1 paipp2-1 (PubMed:33277495). Plants missing all PHD finger-containing proteins (e.g. PHD1, PAIPP2/PHD2, AIPP2/PHD3, PHD4, PHD5 and PHD6) exhibit an increased expression of flowering genes leading to an early flowering phenotype under long-day conditions as well as growth retardation (PubMed:33433058).</text>
</comment>
<comment type="sequence caution" evidence="8">
    <conflict type="erroneous gene model prediction">
        <sequence resource="EMBL-CDS" id="CAC01832"/>
    </conflict>
</comment>